<reference key="1">
    <citation type="journal article" date="2011" name="J. Bacteriol.">
        <title>Comparative genomics of 28 Salmonella enterica isolates: evidence for CRISPR-mediated adaptive sublineage evolution.</title>
        <authorList>
            <person name="Fricke W.F."/>
            <person name="Mammel M.K."/>
            <person name="McDermott P.F."/>
            <person name="Tartera C."/>
            <person name="White D.G."/>
            <person name="Leclerc J.E."/>
            <person name="Ravel J."/>
            <person name="Cebula T.A."/>
        </authorList>
    </citation>
    <scope>NUCLEOTIDE SEQUENCE [LARGE SCALE GENOMIC DNA]</scope>
    <source>
        <strain>CVM19633</strain>
    </source>
</reference>
<organism>
    <name type="scientific">Salmonella schwarzengrund (strain CVM19633)</name>
    <dbReference type="NCBI Taxonomy" id="439843"/>
    <lineage>
        <taxon>Bacteria</taxon>
        <taxon>Pseudomonadati</taxon>
        <taxon>Pseudomonadota</taxon>
        <taxon>Gammaproteobacteria</taxon>
        <taxon>Enterobacterales</taxon>
        <taxon>Enterobacteriaceae</taxon>
        <taxon>Salmonella</taxon>
    </lineage>
</organism>
<feature type="chain" id="PRO_1000146501" description="L-rhamnose-proton symporter">
    <location>
        <begin position="1"/>
        <end position="344"/>
    </location>
</feature>
<feature type="transmembrane region" description="Helical" evidence="1">
    <location>
        <begin position="4"/>
        <end position="24"/>
    </location>
</feature>
<feature type="transmembrane region" description="Helical" evidence="1">
    <location>
        <begin position="38"/>
        <end position="58"/>
    </location>
</feature>
<feature type="transmembrane region" description="Helical" evidence="1">
    <location>
        <begin position="68"/>
        <end position="88"/>
    </location>
</feature>
<feature type="transmembrane region" description="Helical" evidence="1">
    <location>
        <begin position="101"/>
        <end position="121"/>
    </location>
</feature>
<feature type="transmembrane region" description="Helical" evidence="1">
    <location>
        <begin position="137"/>
        <end position="157"/>
    </location>
</feature>
<feature type="transmembrane region" description="Helical" evidence="1">
    <location>
        <begin position="175"/>
        <end position="195"/>
    </location>
</feature>
<feature type="transmembrane region" description="Helical" evidence="1">
    <location>
        <begin position="214"/>
        <end position="234"/>
    </location>
</feature>
<feature type="transmembrane region" description="Helical" evidence="1">
    <location>
        <begin position="259"/>
        <end position="279"/>
    </location>
</feature>
<feature type="transmembrane region" description="Helical" evidence="1">
    <location>
        <begin position="290"/>
        <end position="310"/>
    </location>
</feature>
<feature type="transmembrane region" description="Helical" evidence="1">
    <location>
        <begin position="321"/>
        <end position="341"/>
    </location>
</feature>
<keyword id="KW-0997">Cell inner membrane</keyword>
<keyword id="KW-1003">Cell membrane</keyword>
<keyword id="KW-0472">Membrane</keyword>
<keyword id="KW-0762">Sugar transport</keyword>
<keyword id="KW-0769">Symport</keyword>
<keyword id="KW-0812">Transmembrane</keyword>
<keyword id="KW-1133">Transmembrane helix</keyword>
<keyword id="KW-0813">Transport</keyword>
<protein>
    <recommendedName>
        <fullName evidence="1">L-rhamnose-proton symporter</fullName>
    </recommendedName>
    <alternativeName>
        <fullName evidence="1">L-rhamnose-H(+) transport protein</fullName>
    </alternativeName>
</protein>
<sequence length="344" mass="37390">MSNAITMGIFWHLIGAASAACFYAPFKQVKQWSWETMWSVGGIVSWLILPWTISALLLPDFWAYYGQFNLSTLLPVFLFGAMWGIGNINYGLTMRYLGMSMGIGIAIGITLIVGTLMTPIINGNFDVLIHTEGGRMTLLGVFVALIGVGIVTRAGQLKERKMGIKAEEFNLKKGLLLAVMCGIFSAGMSFAMNAAKPMHEAAAALGVDPLYVALPSYVVIMGGGALVNLGFCFIRLAKVQNLSIKADFSLARPLIISNILLSALGGLMWYLQFFFYAWGHARIPAQYDYMSWMLHMSFYVLCGGLVGLVLKEWKNAGRRPVAVLSLGCVVIIIAANIVGLGMAS</sequence>
<comment type="function">
    <text evidence="1">Uptake of L-rhamnose across the cytoplasmic membrane with the concomitant transport of protons into the cell (symport system).</text>
</comment>
<comment type="catalytic activity">
    <reaction evidence="1">
        <text>L-rhamnopyranose(in) + H(+)(in) = L-rhamnopyranose(out) + H(+)(out)</text>
        <dbReference type="Rhea" id="RHEA:29947"/>
        <dbReference type="ChEBI" id="CHEBI:15378"/>
        <dbReference type="ChEBI" id="CHEBI:62346"/>
    </reaction>
    <physiologicalReaction direction="right-to-left" evidence="1">
        <dbReference type="Rhea" id="RHEA:29949"/>
    </physiologicalReaction>
</comment>
<comment type="subcellular location">
    <subcellularLocation>
        <location evidence="1">Cell inner membrane</location>
        <topology evidence="1">Multi-pass membrane protein</topology>
    </subcellularLocation>
</comment>
<comment type="similarity">
    <text evidence="1">Belongs to the L-rhamnose transporter (TC 2.A.7.6) family.</text>
</comment>
<accession>B4TPR1</accession>
<proteinExistence type="inferred from homology"/>
<dbReference type="EMBL" id="CP001127">
    <property type="protein sequence ID" value="ACF90968.1"/>
    <property type="molecule type" value="Genomic_DNA"/>
</dbReference>
<dbReference type="RefSeq" id="WP_000063541.1">
    <property type="nucleotide sequence ID" value="NC_011094.1"/>
</dbReference>
<dbReference type="KEGG" id="sew:SeSA_A4264"/>
<dbReference type="HOGENOM" id="CLU_066437_0_0_6"/>
<dbReference type="Proteomes" id="UP000001865">
    <property type="component" value="Chromosome"/>
</dbReference>
<dbReference type="GO" id="GO:0005886">
    <property type="term" value="C:plasma membrane"/>
    <property type="evidence" value="ECO:0007669"/>
    <property type="project" value="UniProtKB-SubCell"/>
</dbReference>
<dbReference type="GO" id="GO:0015153">
    <property type="term" value="F:rhamnose transmembrane transporter activity"/>
    <property type="evidence" value="ECO:0007669"/>
    <property type="project" value="UniProtKB-UniRule"/>
</dbReference>
<dbReference type="GO" id="GO:0015293">
    <property type="term" value="F:symporter activity"/>
    <property type="evidence" value="ECO:0007669"/>
    <property type="project" value="UniProtKB-KW"/>
</dbReference>
<dbReference type="HAMAP" id="MF_01532">
    <property type="entry name" value="RhaT"/>
    <property type="match status" value="1"/>
</dbReference>
<dbReference type="InterPro" id="IPR004673">
    <property type="entry name" value="L-rhamnose-proton_sym_RhaT"/>
</dbReference>
<dbReference type="NCBIfam" id="NF010021">
    <property type="entry name" value="PRK13499.1-1"/>
    <property type="match status" value="1"/>
</dbReference>
<dbReference type="NCBIfam" id="NF010023">
    <property type="entry name" value="PRK13499.1-3"/>
    <property type="match status" value="1"/>
</dbReference>
<dbReference type="NCBIfam" id="TIGR00776">
    <property type="entry name" value="RhaT"/>
    <property type="match status" value="1"/>
</dbReference>
<dbReference type="Pfam" id="PF06379">
    <property type="entry name" value="RhaT"/>
    <property type="match status" value="1"/>
</dbReference>
<name>RHAT_SALSV</name>
<evidence type="ECO:0000255" key="1">
    <source>
        <dbReference type="HAMAP-Rule" id="MF_01532"/>
    </source>
</evidence>
<gene>
    <name evidence="1" type="primary">rhaT</name>
    <name type="ordered locus">SeSA_A4264</name>
</gene>